<accession>Q9ZT29</accession>
<organism>
    <name type="scientific">Nicotiana tabacum</name>
    <name type="common">Common tobacco</name>
    <dbReference type="NCBI Taxonomy" id="4097"/>
    <lineage>
        <taxon>Eukaryota</taxon>
        <taxon>Viridiplantae</taxon>
        <taxon>Streptophyta</taxon>
        <taxon>Embryophyta</taxon>
        <taxon>Tracheophyta</taxon>
        <taxon>Spermatophyta</taxon>
        <taxon>Magnoliopsida</taxon>
        <taxon>eudicotyledons</taxon>
        <taxon>Gunneridae</taxon>
        <taxon>Pentapetalae</taxon>
        <taxon>asterids</taxon>
        <taxon>lamiids</taxon>
        <taxon>Solanales</taxon>
        <taxon>Solanaceae</taxon>
        <taxon>Nicotianoideae</taxon>
        <taxon>Nicotianeae</taxon>
        <taxon>Nicotiana</taxon>
    </lineage>
</organism>
<feature type="chain" id="PRO_0000117032" description="Delta(7)-sterol-C5(6)-desaturase">
    <location>
        <begin position="1"/>
        <end position="271"/>
    </location>
</feature>
<feature type="transmembrane region" description="Helical" evidence="3">
    <location>
        <begin position="44"/>
        <end position="64"/>
    </location>
</feature>
<feature type="transmembrane region" description="Helical" evidence="3">
    <location>
        <begin position="120"/>
        <end position="140"/>
    </location>
</feature>
<feature type="transmembrane region" description="Helical" evidence="3">
    <location>
        <begin position="190"/>
        <end position="210"/>
    </location>
</feature>
<feature type="domain" description="Fatty acid hydroxylase" evidence="3">
    <location>
        <begin position="130"/>
        <end position="259"/>
    </location>
</feature>
<feature type="short sequence motif" description="Histidine box-1">
    <location>
        <begin position="144"/>
        <end position="148"/>
    </location>
</feature>
<feature type="short sequence motif" description="Histidine box-2">
    <location>
        <begin position="158"/>
        <end position="162"/>
    </location>
</feature>
<feature type="short sequence motif" description="Histidine box-3">
    <location>
        <begin position="235"/>
        <end position="239"/>
    </location>
</feature>
<sequence>MEDYLKQFVEETSFYNRLVLGTFMPESWWGPLPHMLQGWLRNYIGGVLLYFISGFLWCFYIYHLKRNVYIPKDAIPSNKAMLLQISVAMKAMPWYCALPSLSEYMIENGWTKCFARISDVGWLSYVIYAAIYLVIVEFGIYWMHMELHDIKPLYKYLHATHHIYNKQNTLSPFAGLAFHPLDGILQAVPHVVALLLVPMHFSTHIALIFLEALWTANIHDCIHGKVFPVMGAGYHTIHHRTYRHNYGHYTIWMDWMFGTLRDPVEEDAKKM</sequence>
<evidence type="ECO:0000250" key="1"/>
<evidence type="ECO:0000250" key="2">
    <source>
        <dbReference type="UniProtKB" id="Q39208"/>
    </source>
</evidence>
<evidence type="ECO:0000255" key="3"/>
<evidence type="ECO:0000305" key="4"/>
<proteinExistence type="evidence at transcript level"/>
<reference key="1">
    <citation type="journal article" date="1999" name="Plant Mol. Biol.">
        <title>Delta7-sterol-C5-desaturase: molecular characterization and functional expression of wild-type and mutant alleles.</title>
        <authorList>
            <person name="Husselstein T."/>
            <person name="Schaller H."/>
            <person name="Gachotte D."/>
            <person name="Benveniste P."/>
        </authorList>
    </citation>
    <scope>NUCLEOTIDE SEQUENCE [MRNA]</scope>
    <source>
        <strain>cv. Xanthi</strain>
        <tissue>Callus</tissue>
    </source>
</reference>
<protein>
    <recommendedName>
        <fullName>Delta(7)-sterol-C5(6)-desaturase</fullName>
        <ecNumber>1.14.19.20</ecNumber>
    </recommendedName>
    <alternativeName>
        <fullName>Delta(7)-sterol-C5-desaturase</fullName>
    </alternativeName>
    <alternativeName>
        <fullName>Delta-7-C-5 sterol desaturase</fullName>
    </alternativeName>
</protein>
<comment type="function">
    <text evidence="2">Involved in the biosynthesis of sitosterol and campesterol.</text>
</comment>
<comment type="catalytic activity">
    <reaction evidence="2">
        <text>a Delta(7)-sterol + 2 Fe(II)-[cytochrome b5] + O2 + 2 H(+) = a Delta(5),Delta(7)-sterol + 2 Fe(III)-[cytochrome b5] + 2 H2O</text>
        <dbReference type="Rhea" id="RHEA:54320"/>
        <dbReference type="Rhea" id="RHEA-COMP:10438"/>
        <dbReference type="Rhea" id="RHEA-COMP:10439"/>
        <dbReference type="ChEBI" id="CHEBI:15377"/>
        <dbReference type="ChEBI" id="CHEBI:15378"/>
        <dbReference type="ChEBI" id="CHEBI:15379"/>
        <dbReference type="ChEBI" id="CHEBI:29033"/>
        <dbReference type="ChEBI" id="CHEBI:29034"/>
        <dbReference type="ChEBI" id="CHEBI:138130"/>
        <dbReference type="ChEBI" id="CHEBI:138131"/>
        <dbReference type="EC" id="1.14.19.20"/>
    </reaction>
</comment>
<comment type="cofactor">
    <cofactor evidence="1">
        <name>Fe cation</name>
        <dbReference type="ChEBI" id="CHEBI:24875"/>
    </cofactor>
</comment>
<comment type="subcellular location">
    <subcellularLocation>
        <location evidence="4">Endoplasmic reticulum membrane</location>
        <topology evidence="4">Multi-pass membrane protein</topology>
    </subcellularLocation>
</comment>
<comment type="domain">
    <text>The histidine box domains may contain the active site and/or be involved in metal ion binding.</text>
</comment>
<comment type="similarity">
    <text evidence="4">Belongs to the sterol desaturase family.</text>
</comment>
<keyword id="KW-0256">Endoplasmic reticulum</keyword>
<keyword id="KW-0408">Iron</keyword>
<keyword id="KW-0444">Lipid biosynthesis</keyword>
<keyword id="KW-0443">Lipid metabolism</keyword>
<keyword id="KW-0472">Membrane</keyword>
<keyword id="KW-0560">Oxidoreductase</keyword>
<keyword id="KW-1185">Reference proteome</keyword>
<keyword id="KW-0752">Steroid biosynthesis</keyword>
<keyword id="KW-0753">Steroid metabolism</keyword>
<keyword id="KW-0756">Sterol biosynthesis</keyword>
<keyword id="KW-1207">Sterol metabolism</keyword>
<keyword id="KW-0812">Transmembrane</keyword>
<keyword id="KW-1133">Transmembrane helix</keyword>
<name>SC5D_TOBAC</name>
<dbReference type="EC" id="1.14.19.20"/>
<dbReference type="EMBL" id="AF081794">
    <property type="protein sequence ID" value="AAD04034.1"/>
    <property type="molecule type" value="mRNA"/>
</dbReference>
<dbReference type="RefSeq" id="NP_001311674.1">
    <property type="nucleotide sequence ID" value="NM_001324745.1"/>
</dbReference>
<dbReference type="STRING" id="4097.Q9ZT29"/>
<dbReference type="PaxDb" id="4097-Q9ZT29"/>
<dbReference type="GeneID" id="107762070"/>
<dbReference type="KEGG" id="nta:107762070"/>
<dbReference type="OrthoDB" id="408954at2759"/>
<dbReference type="Proteomes" id="UP000084051">
    <property type="component" value="Unplaced"/>
</dbReference>
<dbReference type="GO" id="GO:0005789">
    <property type="term" value="C:endoplasmic reticulum membrane"/>
    <property type="evidence" value="ECO:0007669"/>
    <property type="project" value="UniProtKB-SubCell"/>
</dbReference>
<dbReference type="GO" id="GO:0000248">
    <property type="term" value="F:C-5 sterol desaturase activity"/>
    <property type="evidence" value="ECO:0000318"/>
    <property type="project" value="GO_Central"/>
</dbReference>
<dbReference type="GO" id="GO:0050046">
    <property type="term" value="F:delta7-sterol 5(6)-desaturase activity"/>
    <property type="evidence" value="ECO:0007669"/>
    <property type="project" value="UniProtKB-EC"/>
</dbReference>
<dbReference type="GO" id="GO:0005506">
    <property type="term" value="F:iron ion binding"/>
    <property type="evidence" value="ECO:0007669"/>
    <property type="project" value="InterPro"/>
</dbReference>
<dbReference type="GO" id="GO:0016126">
    <property type="term" value="P:sterol biosynthetic process"/>
    <property type="evidence" value="ECO:0000318"/>
    <property type="project" value="GO_Central"/>
</dbReference>
<dbReference type="InterPro" id="IPR006694">
    <property type="entry name" value="Fatty_acid_hydroxylase"/>
</dbReference>
<dbReference type="InterPro" id="IPR050307">
    <property type="entry name" value="Sterol_Desaturase_Related"/>
</dbReference>
<dbReference type="PANTHER" id="PTHR11863">
    <property type="entry name" value="STEROL DESATURASE"/>
    <property type="match status" value="1"/>
</dbReference>
<dbReference type="Pfam" id="PF04116">
    <property type="entry name" value="FA_hydroxylase"/>
    <property type="match status" value="1"/>
</dbReference>